<reference key="1">
    <citation type="submission" date="2001-06" db="EMBL/GenBank/DDBJ databases">
        <title>Identification of FAPP1 interacting proteins.</title>
        <authorList>
            <person name="Dowler S.J."/>
        </authorList>
    </citation>
    <scope>NUCLEOTIDE SEQUENCE [MRNA]</scope>
    <source>
        <tissue>Brain</tissue>
    </source>
</reference>
<reference key="2">
    <citation type="journal article" date="2000" name="Gene">
        <title>Criteria for gene identification and features of genome organization: analysis of 6.5 Mb of DNA sequence from human chromosome 21.</title>
        <authorList>
            <person name="Slavov D."/>
            <person name="Hattori M."/>
            <person name="Sakaki Y."/>
            <person name="Rosenthal A."/>
            <person name="Shimizu N."/>
            <person name="Minoshima S."/>
            <person name="Kudoh J."/>
            <person name="Yaspo M.-L."/>
            <person name="Ramser J."/>
            <person name="Reinhardt R."/>
            <person name="Reimer C."/>
            <person name="Clancy K."/>
            <person name="Rynditch A."/>
            <person name="Gardiner K."/>
        </authorList>
    </citation>
    <scope>NUCLEOTIDE SEQUENCE [MRNA]</scope>
</reference>
<reference key="3">
    <citation type="journal article" date="2004" name="Nat. Genet.">
        <title>Complete sequencing and characterization of 21,243 full-length human cDNAs.</title>
        <authorList>
            <person name="Ota T."/>
            <person name="Suzuki Y."/>
            <person name="Nishikawa T."/>
            <person name="Otsuki T."/>
            <person name="Sugiyama T."/>
            <person name="Irie R."/>
            <person name="Wakamatsu A."/>
            <person name="Hayashi K."/>
            <person name="Sato H."/>
            <person name="Nagai K."/>
            <person name="Kimura K."/>
            <person name="Makita H."/>
            <person name="Sekine M."/>
            <person name="Obayashi M."/>
            <person name="Nishi T."/>
            <person name="Shibahara T."/>
            <person name="Tanaka T."/>
            <person name="Ishii S."/>
            <person name="Yamamoto J."/>
            <person name="Saito K."/>
            <person name="Kawai Y."/>
            <person name="Isono Y."/>
            <person name="Nakamura Y."/>
            <person name="Nagahari K."/>
            <person name="Murakami K."/>
            <person name="Yasuda T."/>
            <person name="Iwayanagi T."/>
            <person name="Wagatsuma M."/>
            <person name="Shiratori A."/>
            <person name="Sudo H."/>
            <person name="Hosoiri T."/>
            <person name="Kaku Y."/>
            <person name="Kodaira H."/>
            <person name="Kondo H."/>
            <person name="Sugawara M."/>
            <person name="Takahashi M."/>
            <person name="Kanda K."/>
            <person name="Yokoi T."/>
            <person name="Furuya T."/>
            <person name="Kikkawa E."/>
            <person name="Omura Y."/>
            <person name="Abe K."/>
            <person name="Kamihara K."/>
            <person name="Katsuta N."/>
            <person name="Sato K."/>
            <person name="Tanikawa M."/>
            <person name="Yamazaki M."/>
            <person name="Ninomiya K."/>
            <person name="Ishibashi T."/>
            <person name="Yamashita H."/>
            <person name="Murakawa K."/>
            <person name="Fujimori K."/>
            <person name="Tanai H."/>
            <person name="Kimata M."/>
            <person name="Watanabe M."/>
            <person name="Hiraoka S."/>
            <person name="Chiba Y."/>
            <person name="Ishida S."/>
            <person name="Ono Y."/>
            <person name="Takiguchi S."/>
            <person name="Watanabe S."/>
            <person name="Yosida M."/>
            <person name="Hotuta T."/>
            <person name="Kusano J."/>
            <person name="Kanehori K."/>
            <person name="Takahashi-Fujii A."/>
            <person name="Hara H."/>
            <person name="Tanase T.-O."/>
            <person name="Nomura Y."/>
            <person name="Togiya S."/>
            <person name="Komai F."/>
            <person name="Hara R."/>
            <person name="Takeuchi K."/>
            <person name="Arita M."/>
            <person name="Imose N."/>
            <person name="Musashino K."/>
            <person name="Yuuki H."/>
            <person name="Oshima A."/>
            <person name="Sasaki N."/>
            <person name="Aotsuka S."/>
            <person name="Yoshikawa Y."/>
            <person name="Matsunawa H."/>
            <person name="Ichihara T."/>
            <person name="Shiohata N."/>
            <person name="Sano S."/>
            <person name="Moriya S."/>
            <person name="Momiyama H."/>
            <person name="Satoh N."/>
            <person name="Takami S."/>
            <person name="Terashima Y."/>
            <person name="Suzuki O."/>
            <person name="Nakagawa S."/>
            <person name="Senoh A."/>
            <person name="Mizoguchi H."/>
            <person name="Goto Y."/>
            <person name="Shimizu F."/>
            <person name="Wakebe H."/>
            <person name="Hishigaki H."/>
            <person name="Watanabe T."/>
            <person name="Sugiyama A."/>
            <person name="Takemoto M."/>
            <person name="Kawakami B."/>
            <person name="Yamazaki M."/>
            <person name="Watanabe K."/>
            <person name="Kumagai A."/>
            <person name="Itakura S."/>
            <person name="Fukuzumi Y."/>
            <person name="Fujimori Y."/>
            <person name="Komiyama M."/>
            <person name="Tashiro H."/>
            <person name="Tanigami A."/>
            <person name="Fujiwara T."/>
            <person name="Ono T."/>
            <person name="Yamada K."/>
            <person name="Fujii Y."/>
            <person name="Ozaki K."/>
            <person name="Hirao M."/>
            <person name="Ohmori Y."/>
            <person name="Kawabata A."/>
            <person name="Hikiji T."/>
            <person name="Kobatake N."/>
            <person name="Inagaki H."/>
            <person name="Ikema Y."/>
            <person name="Okamoto S."/>
            <person name="Okitani R."/>
            <person name="Kawakami T."/>
            <person name="Noguchi S."/>
            <person name="Itoh T."/>
            <person name="Shigeta K."/>
            <person name="Senba T."/>
            <person name="Matsumura K."/>
            <person name="Nakajima Y."/>
            <person name="Mizuno T."/>
            <person name="Morinaga M."/>
            <person name="Sasaki M."/>
            <person name="Togashi T."/>
            <person name="Oyama M."/>
            <person name="Hata H."/>
            <person name="Watanabe M."/>
            <person name="Komatsu T."/>
            <person name="Mizushima-Sugano J."/>
            <person name="Satoh T."/>
            <person name="Shirai Y."/>
            <person name="Takahashi Y."/>
            <person name="Nakagawa K."/>
            <person name="Okumura K."/>
            <person name="Nagase T."/>
            <person name="Nomura N."/>
            <person name="Kikuchi H."/>
            <person name="Masuho Y."/>
            <person name="Yamashita R."/>
            <person name="Nakai K."/>
            <person name="Yada T."/>
            <person name="Nakamura Y."/>
            <person name="Ohara O."/>
            <person name="Isogai T."/>
            <person name="Sugano S."/>
        </authorList>
    </citation>
    <scope>NUCLEOTIDE SEQUENCE [LARGE SCALE MRNA]</scope>
    <source>
        <tissue>Testis</tissue>
    </source>
</reference>
<reference key="4">
    <citation type="journal article" date="2005" name="DNA Res.">
        <title>Signal sequence and keyword trap in silico for selection of full-length human cDNAs encoding secretion or membrane proteins from oligo-capped cDNA libraries.</title>
        <authorList>
            <person name="Otsuki T."/>
            <person name="Ota T."/>
            <person name="Nishikawa T."/>
            <person name="Hayashi K."/>
            <person name="Suzuki Y."/>
            <person name="Yamamoto J."/>
            <person name="Wakamatsu A."/>
            <person name="Kimura K."/>
            <person name="Sakamoto K."/>
            <person name="Hatano N."/>
            <person name="Kawai Y."/>
            <person name="Ishii S."/>
            <person name="Saito K."/>
            <person name="Kojima S."/>
            <person name="Sugiyama T."/>
            <person name="Ono T."/>
            <person name="Okano K."/>
            <person name="Yoshikawa Y."/>
            <person name="Aotsuka S."/>
            <person name="Sasaki N."/>
            <person name="Hattori A."/>
            <person name="Okumura K."/>
            <person name="Nagai K."/>
            <person name="Sugano S."/>
            <person name="Isogai T."/>
        </authorList>
    </citation>
    <scope>NUCLEOTIDE SEQUENCE [LARGE SCALE MRNA]</scope>
</reference>
<reference key="5">
    <citation type="submission" date="2005-09" db="EMBL/GenBank/DDBJ databases">
        <authorList>
            <person name="Mural R.J."/>
            <person name="Istrail S."/>
            <person name="Sutton G.G."/>
            <person name="Florea L."/>
            <person name="Halpern A.L."/>
            <person name="Mobarry C.M."/>
            <person name="Lippert R."/>
            <person name="Walenz B."/>
            <person name="Shatkay H."/>
            <person name="Dew I."/>
            <person name="Miller J.R."/>
            <person name="Flanigan M.J."/>
            <person name="Edwards N.J."/>
            <person name="Bolanos R."/>
            <person name="Fasulo D."/>
            <person name="Halldorsson B.V."/>
            <person name="Hannenhalli S."/>
            <person name="Turner R."/>
            <person name="Yooseph S."/>
            <person name="Lu F."/>
            <person name="Nusskern D.R."/>
            <person name="Shue B.C."/>
            <person name="Zheng X.H."/>
            <person name="Zhong F."/>
            <person name="Delcher A.L."/>
            <person name="Huson D.H."/>
            <person name="Kravitz S.A."/>
            <person name="Mouchard L."/>
            <person name="Reinert K."/>
            <person name="Remington K.A."/>
            <person name="Clark A.G."/>
            <person name="Waterman M.S."/>
            <person name="Eichler E.E."/>
            <person name="Adams M.D."/>
            <person name="Hunkapiller M.W."/>
            <person name="Myers E.W."/>
            <person name="Venter J.C."/>
        </authorList>
    </citation>
    <scope>NUCLEOTIDE SEQUENCE [LARGE SCALE GENOMIC DNA]</scope>
</reference>
<reference key="6">
    <citation type="journal article" date="2004" name="Genome Res.">
        <title>The status, quality, and expansion of the NIH full-length cDNA project: the Mammalian Gene Collection (MGC).</title>
        <authorList>
            <consortium name="The MGC Project Team"/>
        </authorList>
    </citation>
    <scope>NUCLEOTIDE SEQUENCE [LARGE SCALE MRNA]</scope>
    <source>
        <tissue>Blood</tissue>
    </source>
</reference>
<reference key="7">
    <citation type="journal article" date="2007" name="Dev. Cell">
        <title>Priming of centromere for CENP-A recruitment by human hMis18alpha, hMis18beta, and M18BP1.</title>
        <authorList>
            <person name="Fujita Y."/>
            <person name="Hayashi T."/>
            <person name="Kiyomitsu T."/>
            <person name="Toyoda Y."/>
            <person name="Kokubu A."/>
            <person name="Obuse C."/>
            <person name="Yanagida M."/>
        </authorList>
    </citation>
    <scope>FUNCTION</scope>
    <scope>SUBCELLULAR LOCATION</scope>
    <scope>INTERACTION WITH OIP5 AND MIS18BP1</scope>
    <scope>IDENTIFICATION IN A COMPLEX CONTAINING MIS18A; OIP5; MIS18BP1; RBBP7 AND RBBP4</scope>
    <scope>IDENTIFICATION BY MASS SPECTROMETRY</scope>
    <scope>MUTAGENESIS OF CYS-85; CYS-88; CYS-134; CYS-141 AND CYS-144</scope>
    <scope>TISSUE SPECIFICITY</scope>
</reference>
<reference key="8">
    <citation type="journal article" date="2008" name="Proc. Natl. Acad. Sci. U.S.A.">
        <title>A quantitative atlas of mitotic phosphorylation.</title>
        <authorList>
            <person name="Dephoure N."/>
            <person name="Zhou C."/>
            <person name="Villen J."/>
            <person name="Beausoleil S.A."/>
            <person name="Bakalarski C.E."/>
            <person name="Elledge S.J."/>
            <person name="Gygi S.P."/>
        </authorList>
    </citation>
    <scope>PHOSPHORYLATION [LARGE SCALE ANALYSIS] AT SER-233</scope>
    <scope>IDENTIFICATION BY MASS SPECTROMETRY [LARGE SCALE ANALYSIS]</scope>
    <source>
        <tissue>Cervix carcinoma</tissue>
    </source>
</reference>
<reference key="9">
    <citation type="journal article" date="2010" name="Sci. Signal.">
        <title>Quantitative phosphoproteomics reveals widespread full phosphorylation site occupancy during mitosis.</title>
        <authorList>
            <person name="Olsen J.V."/>
            <person name="Vermeulen M."/>
            <person name="Santamaria A."/>
            <person name="Kumar C."/>
            <person name="Miller M.L."/>
            <person name="Jensen L.J."/>
            <person name="Gnad F."/>
            <person name="Cox J."/>
            <person name="Jensen T.S."/>
            <person name="Nigg E.A."/>
            <person name="Brunak S."/>
            <person name="Mann M."/>
        </authorList>
    </citation>
    <scope>PHOSPHORYLATION [LARGE SCALE ANALYSIS] AT SER-36</scope>
    <scope>IDENTIFICATION BY MASS SPECTROMETRY [LARGE SCALE ANALYSIS]</scope>
    <source>
        <tissue>Cervix carcinoma</tissue>
    </source>
</reference>
<reference key="10">
    <citation type="journal article" date="2013" name="J. Proteome Res.">
        <title>Toward a comprehensive characterization of a human cancer cell phosphoproteome.</title>
        <authorList>
            <person name="Zhou H."/>
            <person name="Di Palma S."/>
            <person name="Preisinger C."/>
            <person name="Peng M."/>
            <person name="Polat A.N."/>
            <person name="Heck A.J."/>
            <person name="Mohammed S."/>
        </authorList>
    </citation>
    <scope>PHOSPHORYLATION [LARGE SCALE ANALYSIS] AT SER-36; SER-39 AND SER-40</scope>
    <scope>IDENTIFICATION BY MASS SPECTROMETRY [LARGE SCALE ANALYSIS]</scope>
    <source>
        <tissue>Cervix carcinoma</tissue>
        <tissue>Erythroleukemia</tissue>
    </source>
</reference>
<reference key="11">
    <citation type="journal article" date="2016" name="EMBO Rep.">
        <title>Centromere localization and function of Mis18 requires Yippee-like domain-mediated oligomerization.</title>
        <authorList>
            <person name="Subramanian L."/>
            <person name="Medina-Pritchard B."/>
            <person name="Barton R."/>
            <person name="Spiller F."/>
            <person name="Kulasegaran-Shylini R."/>
            <person name="Radaviciute G."/>
            <person name="Allshire R.C."/>
            <person name="Arockia Jeyaprakash A."/>
        </authorList>
    </citation>
    <scope>SUBUNIT</scope>
    <scope>MUTAGENESIS OF VAL-82 AND TYR-176</scope>
</reference>
<reference key="12">
    <citation type="journal article" date="2017" name="Nat. Struct. Mol. Biol.">
        <title>Site-specific mapping of the human SUMO proteome reveals co-modification with phosphorylation.</title>
        <authorList>
            <person name="Hendriks I.A."/>
            <person name="Lyon D."/>
            <person name="Young C."/>
            <person name="Jensen L.J."/>
            <person name="Vertegaal A.C."/>
            <person name="Nielsen M.L."/>
        </authorList>
    </citation>
    <scope>SUMOYLATION [LARGE SCALE ANALYSIS] AT LYS-162</scope>
    <scope>IDENTIFICATION BY MASS SPECTROMETRY [LARGE SCALE ANALYSIS]</scope>
</reference>
<name>MS18A_HUMAN</name>
<accession>Q9NYP9</accession>
<accession>B2R562</accession>
<accession>Q542Z0</accession>
<evidence type="ECO:0000255" key="1">
    <source>
        <dbReference type="PROSITE-ProRule" id="PRU01129"/>
    </source>
</evidence>
<evidence type="ECO:0000269" key="2">
    <source>
    </source>
</evidence>
<evidence type="ECO:0000269" key="3">
    <source>
    </source>
</evidence>
<evidence type="ECO:0007744" key="4">
    <source>
    </source>
</evidence>
<evidence type="ECO:0007744" key="5">
    <source>
    </source>
</evidence>
<evidence type="ECO:0007744" key="6">
    <source>
    </source>
</evidence>
<evidence type="ECO:0007744" key="7">
    <source>
    </source>
</evidence>
<evidence type="ECO:0007829" key="8">
    <source>
        <dbReference type="PDB" id="7SFY"/>
    </source>
</evidence>
<evidence type="ECO:0007829" key="9">
    <source>
        <dbReference type="PDB" id="7SFZ"/>
    </source>
</evidence>
<evidence type="ECO:0007829" key="10">
    <source>
        <dbReference type="PDB" id="8S30"/>
    </source>
</evidence>
<feature type="chain" id="PRO_0000079515" description="Protein Mis18-alpha">
    <location>
        <begin position="1"/>
        <end position="233"/>
    </location>
</feature>
<feature type="domain" description="Mis18" evidence="1">
    <location>
        <begin position="80"/>
        <end position="178"/>
    </location>
</feature>
<feature type="binding site" evidence="1">
    <location>
        <position position="85"/>
    </location>
    <ligand>
        <name>Zn(2+)</name>
        <dbReference type="ChEBI" id="CHEBI:29105"/>
    </ligand>
</feature>
<feature type="binding site" evidence="1">
    <location>
        <position position="88"/>
    </location>
    <ligand>
        <name>Zn(2+)</name>
        <dbReference type="ChEBI" id="CHEBI:29105"/>
    </ligand>
</feature>
<feature type="binding site" evidence="1">
    <location>
        <position position="141"/>
    </location>
    <ligand>
        <name>Zn(2+)</name>
        <dbReference type="ChEBI" id="CHEBI:29105"/>
    </ligand>
</feature>
<feature type="binding site" evidence="1">
    <location>
        <position position="144"/>
    </location>
    <ligand>
        <name>Zn(2+)</name>
        <dbReference type="ChEBI" id="CHEBI:29105"/>
    </ligand>
</feature>
<feature type="modified residue" description="Phosphoserine" evidence="5 6">
    <location>
        <position position="36"/>
    </location>
</feature>
<feature type="modified residue" description="Phosphoserine" evidence="6">
    <location>
        <position position="39"/>
    </location>
</feature>
<feature type="modified residue" description="Phosphoserine" evidence="6">
    <location>
        <position position="40"/>
    </location>
</feature>
<feature type="modified residue" description="Phosphoserine" evidence="4">
    <location>
        <position position="233"/>
    </location>
</feature>
<feature type="cross-link" description="Glycyl lysine isopeptide (Lys-Gly) (interchain with G-Cter in SUMO2)" evidence="7">
    <location>
        <position position="162"/>
    </location>
</feature>
<feature type="mutagenesis site" description="Abolishes interaction with OIP5; when associated with D-176." evidence="3">
    <original>V</original>
    <variation>E</variation>
    <location>
        <position position="82"/>
    </location>
</feature>
<feature type="mutagenesis site" description="Abolishes location at the centromere." evidence="2">
    <original>C</original>
    <variation>A</variation>
    <location>
        <position position="85"/>
    </location>
</feature>
<feature type="mutagenesis site" description="Abolishes location at the centromere." evidence="2">
    <original>C</original>
    <variation>A</variation>
    <location>
        <position position="88"/>
    </location>
</feature>
<feature type="mutagenesis site" description="No effect." evidence="2">
    <original>C</original>
    <variation>A</variation>
    <location>
        <position position="134"/>
    </location>
</feature>
<feature type="mutagenesis site" description="Abolishes location at the centromere." evidence="2">
    <original>C</original>
    <variation>A</variation>
    <location>
        <position position="141"/>
    </location>
</feature>
<feature type="mutagenesis site" description="Abolishes location at the centromere." evidence="2">
    <original>C</original>
    <variation>A</variation>
    <location>
        <position position="144"/>
    </location>
</feature>
<feature type="mutagenesis site" description="Abolishes interaction with OIP5; when associated with E-82." evidence="3">
    <original>Y</original>
    <variation>D</variation>
    <location>
        <position position="176"/>
    </location>
</feature>
<feature type="strand" evidence="10">
    <location>
        <begin position="51"/>
        <end position="53"/>
    </location>
</feature>
<feature type="strand" evidence="9">
    <location>
        <begin position="81"/>
        <end position="85"/>
    </location>
</feature>
<feature type="turn" evidence="9">
    <location>
        <begin position="86"/>
        <end position="88"/>
    </location>
</feature>
<feature type="strand" evidence="9">
    <location>
        <begin position="91"/>
        <end position="94"/>
    </location>
</feature>
<feature type="helix" evidence="9">
    <location>
        <begin position="95"/>
        <end position="97"/>
    </location>
</feature>
<feature type="strand" evidence="9">
    <location>
        <begin position="105"/>
        <end position="112"/>
    </location>
</feature>
<feature type="strand" evidence="9">
    <location>
        <begin position="117"/>
        <end position="120"/>
    </location>
</feature>
<feature type="strand" evidence="9">
    <location>
        <begin position="135"/>
        <end position="141"/>
    </location>
</feature>
<feature type="turn" evidence="9">
    <location>
        <begin position="142"/>
        <end position="144"/>
    </location>
</feature>
<feature type="strand" evidence="9">
    <location>
        <begin position="147"/>
        <end position="154"/>
    </location>
</feature>
<feature type="helix" evidence="9">
    <location>
        <begin position="157"/>
        <end position="159"/>
    </location>
</feature>
<feature type="turn" evidence="9">
    <location>
        <begin position="160"/>
        <end position="162"/>
    </location>
</feature>
<feature type="strand" evidence="9">
    <location>
        <begin position="166"/>
        <end position="169"/>
    </location>
</feature>
<feature type="strand" evidence="9">
    <location>
        <begin position="172"/>
        <end position="178"/>
    </location>
</feature>
<feature type="helix" evidence="8">
    <location>
        <begin position="198"/>
        <end position="227"/>
    </location>
</feature>
<keyword id="KW-0002">3D-structure</keyword>
<keyword id="KW-0131">Cell cycle</keyword>
<keyword id="KW-0132">Cell division</keyword>
<keyword id="KW-0137">Centromere</keyword>
<keyword id="KW-0158">Chromosome</keyword>
<keyword id="KW-1017">Isopeptide bond</keyword>
<keyword id="KW-0479">Metal-binding</keyword>
<keyword id="KW-0498">Mitosis</keyword>
<keyword id="KW-0539">Nucleus</keyword>
<keyword id="KW-0597">Phosphoprotein</keyword>
<keyword id="KW-1267">Proteomics identification</keyword>
<keyword id="KW-1185">Reference proteome</keyword>
<keyword id="KW-0832">Ubl conjugation</keyword>
<keyword id="KW-0862">Zinc</keyword>
<gene>
    <name type="primary">MIS18A</name>
    <name type="synonym">C21orf45</name>
    <name type="synonym">C21orf46</name>
    <name type="synonym">FASP1</name>
</gene>
<proteinExistence type="evidence at protein level"/>
<protein>
    <recommendedName>
        <fullName>Protein Mis18-alpha</fullName>
    </recommendedName>
    <alternativeName>
        <fullName>FAPP1-associated protein 1</fullName>
    </alternativeName>
</protein>
<dbReference type="EMBL" id="AF387845">
    <property type="protein sequence ID" value="AAK70498.1"/>
    <property type="molecule type" value="mRNA"/>
</dbReference>
<dbReference type="EMBL" id="AF231921">
    <property type="protein sequence ID" value="AAF72945.1"/>
    <property type="molecule type" value="mRNA"/>
</dbReference>
<dbReference type="EMBL" id="AK075281">
    <property type="protein sequence ID" value="BAC11517.1"/>
    <property type="molecule type" value="mRNA"/>
</dbReference>
<dbReference type="EMBL" id="AK312073">
    <property type="protein sequence ID" value="BAG35009.1"/>
    <property type="molecule type" value="mRNA"/>
</dbReference>
<dbReference type="EMBL" id="CH471079">
    <property type="protein sequence ID" value="EAX09881.1"/>
    <property type="molecule type" value="Genomic_DNA"/>
</dbReference>
<dbReference type="EMBL" id="BC042917">
    <property type="protein sequence ID" value="AAH42917.1"/>
    <property type="molecule type" value="mRNA"/>
</dbReference>
<dbReference type="CCDS" id="CCDS13611.1"/>
<dbReference type="RefSeq" id="NP_061817.1">
    <property type="nucleotide sequence ID" value="NM_018944.3"/>
</dbReference>
<dbReference type="PDB" id="7SFY">
    <property type="method" value="X-ray"/>
    <property type="resolution" value="2.50 A"/>
    <property type="chains" value="A/B/D/E=191-233"/>
</dbReference>
<dbReference type="PDB" id="7SFZ">
    <property type="method" value="X-ray"/>
    <property type="resolution" value="3.00 A"/>
    <property type="chains" value="A/B/C/D/E/F/G/H=77-190"/>
</dbReference>
<dbReference type="PDB" id="8S30">
    <property type="method" value="X-ray"/>
    <property type="resolution" value="1.94 A"/>
    <property type="chains" value="B=49-55"/>
</dbReference>
<dbReference type="PDBsum" id="7SFY"/>
<dbReference type="PDBsum" id="7SFZ"/>
<dbReference type="PDBsum" id="8S30"/>
<dbReference type="EMDB" id="EMD-50218"/>
<dbReference type="EMDB" id="EMD-50219"/>
<dbReference type="EMDB" id="EMD-50220"/>
<dbReference type="SMR" id="Q9NYP9"/>
<dbReference type="BioGRID" id="119875">
    <property type="interactions" value="98"/>
</dbReference>
<dbReference type="ComplexPortal" id="CPX-3272">
    <property type="entry name" value="Mis18 complex"/>
</dbReference>
<dbReference type="CORUM" id="Q9NYP9"/>
<dbReference type="FunCoup" id="Q9NYP9">
    <property type="interactions" value="2674"/>
</dbReference>
<dbReference type="IntAct" id="Q9NYP9">
    <property type="interactions" value="88"/>
</dbReference>
<dbReference type="MINT" id="Q9NYP9"/>
<dbReference type="STRING" id="9606.ENSP00000290130"/>
<dbReference type="GlyGen" id="Q9NYP9">
    <property type="glycosylation" value="2 sites, 1 O-linked glycan (2 sites)"/>
</dbReference>
<dbReference type="iPTMnet" id="Q9NYP9"/>
<dbReference type="PhosphoSitePlus" id="Q9NYP9"/>
<dbReference type="SwissPalm" id="Q9NYP9"/>
<dbReference type="BioMuta" id="MIS18A"/>
<dbReference type="DMDM" id="12229716"/>
<dbReference type="jPOST" id="Q9NYP9"/>
<dbReference type="MassIVE" id="Q9NYP9"/>
<dbReference type="PaxDb" id="9606-ENSP00000290130"/>
<dbReference type="PeptideAtlas" id="Q9NYP9"/>
<dbReference type="ProteomicsDB" id="83261"/>
<dbReference type="Pumba" id="Q9NYP9"/>
<dbReference type="Antibodypedia" id="6843">
    <property type="antibodies" value="58 antibodies from 18 providers"/>
</dbReference>
<dbReference type="DNASU" id="54069"/>
<dbReference type="Ensembl" id="ENST00000290130.4">
    <property type="protein sequence ID" value="ENSP00000290130.3"/>
    <property type="gene ID" value="ENSG00000159055.4"/>
</dbReference>
<dbReference type="GeneID" id="54069"/>
<dbReference type="KEGG" id="hsa:54069"/>
<dbReference type="MANE-Select" id="ENST00000290130.4">
    <property type="protein sequence ID" value="ENSP00000290130.3"/>
    <property type="RefSeq nucleotide sequence ID" value="NM_018944.3"/>
    <property type="RefSeq protein sequence ID" value="NP_061817.1"/>
</dbReference>
<dbReference type="UCSC" id="uc002ypi.4">
    <property type="organism name" value="human"/>
</dbReference>
<dbReference type="AGR" id="HGNC:1286"/>
<dbReference type="CTD" id="54069"/>
<dbReference type="DisGeNET" id="54069"/>
<dbReference type="GeneCards" id="MIS18A"/>
<dbReference type="HGNC" id="HGNC:1286">
    <property type="gene designation" value="MIS18A"/>
</dbReference>
<dbReference type="HPA" id="ENSG00000159055">
    <property type="expression patterns" value="Low tissue specificity"/>
</dbReference>
<dbReference type="MIM" id="618137">
    <property type="type" value="gene"/>
</dbReference>
<dbReference type="neXtProt" id="NX_Q9NYP9"/>
<dbReference type="OpenTargets" id="ENSG00000159055"/>
<dbReference type="PharmGKB" id="PA25840"/>
<dbReference type="VEuPathDB" id="HostDB:ENSG00000159055"/>
<dbReference type="eggNOG" id="ENOG502S9R8">
    <property type="taxonomic scope" value="Eukaryota"/>
</dbReference>
<dbReference type="GeneTree" id="ENSGT00940000154267"/>
<dbReference type="HOGENOM" id="CLU_101031_0_0_1"/>
<dbReference type="InParanoid" id="Q9NYP9"/>
<dbReference type="OMA" id="EMKMLVM"/>
<dbReference type="OrthoDB" id="74210at2759"/>
<dbReference type="PAN-GO" id="Q9NYP9">
    <property type="GO annotations" value="5 GO annotations based on evolutionary models"/>
</dbReference>
<dbReference type="PhylomeDB" id="Q9NYP9"/>
<dbReference type="TreeFam" id="TF333200"/>
<dbReference type="PathwayCommons" id="Q9NYP9"/>
<dbReference type="Reactome" id="R-HSA-606279">
    <property type="pathway name" value="Deposition of new CENPA-containing nucleosomes at the centromere"/>
</dbReference>
<dbReference type="SignaLink" id="Q9NYP9"/>
<dbReference type="BioGRID-ORCS" id="54069">
    <property type="hits" value="532 hits in 1168 CRISPR screens"/>
</dbReference>
<dbReference type="ChiTaRS" id="MIS18A">
    <property type="organism name" value="human"/>
</dbReference>
<dbReference type="GeneWiki" id="C21orf45"/>
<dbReference type="GenomeRNAi" id="54069"/>
<dbReference type="Pharos" id="Q9NYP9">
    <property type="development level" value="Tbio"/>
</dbReference>
<dbReference type="PRO" id="PR:Q9NYP9"/>
<dbReference type="Proteomes" id="UP000005640">
    <property type="component" value="Chromosome 21"/>
</dbReference>
<dbReference type="RNAct" id="Q9NYP9">
    <property type="molecule type" value="protein"/>
</dbReference>
<dbReference type="Bgee" id="ENSG00000159055">
    <property type="expression patterns" value="Expressed in oocyte and 174 other cell types or tissues"/>
</dbReference>
<dbReference type="GO" id="GO:0098654">
    <property type="term" value="C:CENP-A recruiting complex"/>
    <property type="evidence" value="ECO:0007669"/>
    <property type="project" value="Ensembl"/>
</dbReference>
<dbReference type="GO" id="GO:0000785">
    <property type="term" value="C:chromatin"/>
    <property type="evidence" value="ECO:0000318"/>
    <property type="project" value="GO_Central"/>
</dbReference>
<dbReference type="GO" id="GO:0000775">
    <property type="term" value="C:chromosome, centromeric region"/>
    <property type="evidence" value="ECO:0000318"/>
    <property type="project" value="GO_Central"/>
</dbReference>
<dbReference type="GO" id="GO:0005829">
    <property type="term" value="C:cytosol"/>
    <property type="evidence" value="ECO:0000314"/>
    <property type="project" value="HPA"/>
</dbReference>
<dbReference type="GO" id="GO:0005654">
    <property type="term" value="C:nucleoplasm"/>
    <property type="evidence" value="ECO:0000314"/>
    <property type="project" value="HPA"/>
</dbReference>
<dbReference type="GO" id="GO:0005634">
    <property type="term" value="C:nucleus"/>
    <property type="evidence" value="ECO:0000318"/>
    <property type="project" value="GO_Central"/>
</dbReference>
<dbReference type="GO" id="GO:0042802">
    <property type="term" value="F:identical protein binding"/>
    <property type="evidence" value="ECO:0000353"/>
    <property type="project" value="IntAct"/>
</dbReference>
<dbReference type="GO" id="GO:0046872">
    <property type="term" value="F:metal ion binding"/>
    <property type="evidence" value="ECO:0007669"/>
    <property type="project" value="UniProtKB-KW"/>
</dbReference>
<dbReference type="GO" id="GO:0030674">
    <property type="term" value="F:protein-macromolecule adaptor activity"/>
    <property type="evidence" value="ECO:0007669"/>
    <property type="project" value="Ensembl"/>
</dbReference>
<dbReference type="GO" id="GO:0051301">
    <property type="term" value="P:cell division"/>
    <property type="evidence" value="ECO:0007669"/>
    <property type="project" value="UniProtKB-KW"/>
</dbReference>
<dbReference type="GO" id="GO:0034080">
    <property type="term" value="P:CENP-A containing chromatin assembly"/>
    <property type="evidence" value="ECO:0000318"/>
    <property type="project" value="GO_Central"/>
</dbReference>
<dbReference type="GO" id="GO:0007059">
    <property type="term" value="P:chromosome segregation"/>
    <property type="evidence" value="ECO:0000318"/>
    <property type="project" value="GO_Central"/>
</dbReference>
<dbReference type="GO" id="GO:0140462">
    <property type="term" value="P:pericentric heterochromatin organization"/>
    <property type="evidence" value="ECO:0007669"/>
    <property type="project" value="Ensembl"/>
</dbReference>
<dbReference type="GO" id="GO:0071459">
    <property type="term" value="P:protein localization to chromosome, centromeric region"/>
    <property type="evidence" value="ECO:0007669"/>
    <property type="project" value="Ensembl"/>
</dbReference>
<dbReference type="InterPro" id="IPR034752">
    <property type="entry name" value="Mis18"/>
</dbReference>
<dbReference type="InterPro" id="IPR004910">
    <property type="entry name" value="Yippee/Mis18/Cereblon"/>
</dbReference>
<dbReference type="PANTHER" id="PTHR16431">
    <property type="entry name" value="NEUROGENIC PROTEIN MASTERMIND"/>
    <property type="match status" value="1"/>
</dbReference>
<dbReference type="PANTHER" id="PTHR16431:SF2">
    <property type="entry name" value="PROTEIN MIS18-ALPHA"/>
    <property type="match status" value="1"/>
</dbReference>
<dbReference type="Pfam" id="PF03226">
    <property type="entry name" value="Yippee-Mis18"/>
    <property type="match status" value="1"/>
</dbReference>
<dbReference type="PROSITE" id="PS51793">
    <property type="entry name" value="MIS18"/>
    <property type="match status" value="1"/>
</dbReference>
<sequence>MAGVRSLRCSRGCAGGCECGDKGKCSDSSLLGKRLSEDSSRHQLLQKWASMWSSMSEDASVADMERAQLEEEAAAAEERPLVFLCSGCRRPLGDSLSWVASQEDTNCILLRCVSCNVSVDKEQKLSKREKENGCVLETLCCAGCSLNLGYVYRCTPKNLDYKRDLFCLSVEAIESYVLGSSEKQIVSEDKELFNLESRVEIEKSLTQMEDVLKALQMKLWEAESKLSFATCKS</sequence>
<organism>
    <name type="scientific">Homo sapiens</name>
    <name type="common">Human</name>
    <dbReference type="NCBI Taxonomy" id="9606"/>
    <lineage>
        <taxon>Eukaryota</taxon>
        <taxon>Metazoa</taxon>
        <taxon>Chordata</taxon>
        <taxon>Craniata</taxon>
        <taxon>Vertebrata</taxon>
        <taxon>Euteleostomi</taxon>
        <taxon>Mammalia</taxon>
        <taxon>Eutheria</taxon>
        <taxon>Euarchontoglires</taxon>
        <taxon>Primates</taxon>
        <taxon>Haplorrhini</taxon>
        <taxon>Catarrhini</taxon>
        <taxon>Hominidae</taxon>
        <taxon>Homo</taxon>
    </lineage>
</organism>
<comment type="function">
    <text evidence="2">Required for recruitment of CENPA to centromeres and normal chromosome segregation during mitosis.</text>
</comment>
<comment type="subunit">
    <text evidence="2 3">Homodimer, and heterodimer with OIP5/MIS18B (PubMed:17199038, PubMed:26921242). Identified in a complex containing MIS18A, OIP5/MIS18B, MIS18BP1, RBBP7 and RBBP4 (PubMed:17199038).</text>
</comment>
<comment type="interaction">
    <interactant intactId="EBI-1104552">
        <id>Q9NYP9</id>
    </interactant>
    <interactant intactId="EBI-742038">
        <id>Q9P2A4</id>
        <label>ABI3</label>
    </interactant>
    <organismsDiffer>false</organismsDiffer>
    <experiments>3</experiments>
</comment>
<comment type="interaction">
    <interactant intactId="EBI-1104552">
        <id>Q9NYP9</id>
    </interactant>
    <interactant intactId="EBI-745226">
        <id>Q13155</id>
        <label>AIMP2</label>
    </interactant>
    <organismsDiffer>false</organismsDiffer>
    <experiments>6</experiments>
</comment>
<comment type="interaction">
    <interactant intactId="EBI-1104552">
        <id>Q9NYP9</id>
    </interactant>
    <interactant intactId="EBI-17286414">
        <id>A2BDD9</id>
        <label>AMOT</label>
    </interactant>
    <organismsDiffer>false</organismsDiffer>
    <experiments>3</experiments>
</comment>
<comment type="interaction">
    <interactant intactId="EBI-1104552">
        <id>Q9NYP9</id>
    </interactant>
    <interactant intactId="EBI-2690371">
        <id>Q6ZNE5</id>
        <label>ATG14</label>
    </interactant>
    <organismsDiffer>false</organismsDiffer>
    <experiments>4</experiments>
</comment>
<comment type="interaction">
    <interactant intactId="EBI-1104552">
        <id>Q9NYP9</id>
    </interactant>
    <interactant intactId="EBI-10304361">
        <id>Q9H0E9-2</id>
        <label>BRD8</label>
    </interactant>
    <organismsDiffer>false</organismsDiffer>
    <experiments>3</experiments>
</comment>
<comment type="interaction">
    <interactant intactId="EBI-1104552">
        <id>Q9NYP9</id>
    </interactant>
    <interactant intactId="EBI-747505">
        <id>Q8TAB5</id>
        <label>C1orf216</label>
    </interactant>
    <organismsDiffer>false</organismsDiffer>
    <experiments>3</experiments>
</comment>
<comment type="interaction">
    <interactant intactId="EBI-1104552">
        <id>Q9NYP9</id>
    </interactant>
    <interactant intactId="EBI-2810325">
        <id>Q96NT0</id>
        <label>CCDC115</label>
    </interactant>
    <organismsDiffer>false</organismsDiffer>
    <experiments>3</experiments>
</comment>
<comment type="interaction">
    <interactant intactId="EBI-1104552">
        <id>Q9NYP9</id>
    </interactant>
    <interactant intactId="EBI-1642108">
        <id>Q16281</id>
        <label>CNGA3</label>
    </interactant>
    <organismsDiffer>false</organismsDiffer>
    <experiments>3</experiments>
</comment>
<comment type="interaction">
    <interactant intactId="EBI-1104552">
        <id>Q9NYP9</id>
    </interactant>
    <interactant intactId="EBI-399105">
        <id>Q9NPF5</id>
        <label>DMAP1</label>
    </interactant>
    <organismsDiffer>false</organismsDiffer>
    <experiments>3</experiments>
</comment>
<comment type="interaction">
    <interactant intactId="EBI-1104552">
        <id>Q9NYP9</id>
    </interactant>
    <interactant intactId="EBI-744935">
        <id>Q9BVV2</id>
        <label>FNDC11</label>
    </interactant>
    <organismsDiffer>false</organismsDiffer>
    <experiments>3</experiments>
</comment>
<comment type="interaction">
    <interactant intactId="EBI-1104552">
        <id>Q9NYP9</id>
    </interactant>
    <interactant intactId="EBI-715444">
        <id>P23434</id>
        <label>GCSH</label>
    </interactant>
    <organismsDiffer>false</organismsDiffer>
    <experiments>3</experiments>
</comment>
<comment type="interaction">
    <interactant intactId="EBI-1104552">
        <id>Q9NYP9</id>
    </interactant>
    <interactant intactId="EBI-748515">
        <id>Q8IVS8</id>
        <label>GLYCTK</label>
    </interactant>
    <organismsDiffer>false</organismsDiffer>
    <experiments>4</experiments>
</comment>
<comment type="interaction">
    <interactant intactId="EBI-1104552">
        <id>Q9NYP9</id>
    </interactant>
    <interactant intactId="EBI-9091197">
        <id>Q8IY31-3</id>
        <label>IFT20</label>
    </interactant>
    <organismsDiffer>false</organismsDiffer>
    <experiments>3</experiments>
</comment>
<comment type="interaction">
    <interactant intactId="EBI-1104552">
        <id>Q9NYP9</id>
    </interactant>
    <interactant intactId="EBI-10975473">
        <id>O60333-2</id>
        <label>KIF1B</label>
    </interactant>
    <organismsDiffer>false</organismsDiffer>
    <experiments>3</experiments>
</comment>
<comment type="interaction">
    <interactant intactId="EBI-1104552">
        <id>Q9NYP9</id>
    </interactant>
    <interactant intactId="EBI-948266">
        <id>O14901</id>
        <label>KLF11</label>
    </interactant>
    <organismsDiffer>false</organismsDiffer>
    <experiments>3</experiments>
</comment>
<comment type="interaction">
    <interactant intactId="EBI-1104552">
        <id>Q9NYP9</id>
    </interactant>
    <interactant intactId="EBI-10182361">
        <id>Q9NS73-5</id>
        <label>MBIP</label>
    </interactant>
    <organismsDiffer>false</organismsDiffer>
    <experiments>3</experiments>
</comment>
<comment type="interaction">
    <interactant intactId="EBI-1104552">
        <id>Q9NYP9</id>
    </interactant>
    <interactant intactId="EBI-1104552">
        <id>Q9NYP9</id>
        <label>MIS18A</label>
    </interactant>
    <organismsDiffer>false</organismsDiffer>
    <experiments>3</experiments>
</comment>
<comment type="interaction">
    <interactant intactId="EBI-1104552">
        <id>Q9NYP9</id>
    </interactant>
    <interactant intactId="EBI-928842">
        <id>Q9GZM8</id>
        <label>NDEL1</label>
    </interactant>
    <organismsDiffer>false</organismsDiffer>
    <experiments>5</experiments>
</comment>
<comment type="interaction">
    <interactant intactId="EBI-1104552">
        <id>Q9NYP9</id>
    </interactant>
    <interactant intactId="EBI-741158">
        <id>Q96HA8</id>
        <label>NTAQ1</label>
    </interactant>
    <organismsDiffer>false</organismsDiffer>
    <experiments>3</experiments>
</comment>
<comment type="interaction">
    <interactant intactId="EBI-1104552">
        <id>Q9NYP9</id>
    </interactant>
    <interactant intactId="EBI-2811583">
        <id>Q9BVL2</id>
        <label>NUP58</label>
    </interactant>
    <organismsDiffer>false</organismsDiffer>
    <experiments>6</experiments>
</comment>
<comment type="interaction">
    <interactant intactId="EBI-1104552">
        <id>Q9NYP9</id>
    </interactant>
    <interactant intactId="EBI-536879">
        <id>O43482</id>
        <label>OIP5</label>
    </interactant>
    <organismsDiffer>false</organismsDiffer>
    <experiments>25</experiments>
</comment>
<comment type="interaction">
    <interactant intactId="EBI-1104552">
        <id>Q9NYP9</id>
    </interactant>
    <interactant intactId="EBI-1105153">
        <id>Q96KQ4</id>
        <label>PPP1R13B</label>
    </interactant>
    <organismsDiffer>false</organismsDiffer>
    <experiments>3</experiments>
</comment>
<comment type="interaction">
    <interactant intactId="EBI-1104552">
        <id>Q9NYP9</id>
    </interactant>
    <interactant intactId="EBI-749195">
        <id>P60891</id>
        <label>PRPS1</label>
    </interactant>
    <organismsDiffer>false</organismsDiffer>
    <experiments>3</experiments>
</comment>
<comment type="interaction">
    <interactant intactId="EBI-1104552">
        <id>Q9NYP9</id>
    </interactant>
    <interactant intactId="EBI-10217913">
        <id>Q14D33</id>
        <label>RTP5</label>
    </interactant>
    <organismsDiffer>false</organismsDiffer>
    <experiments>3</experiments>
</comment>
<comment type="interaction">
    <interactant intactId="EBI-1104552">
        <id>Q9NYP9</id>
    </interactant>
    <interactant intactId="EBI-714135">
        <id>O75558</id>
        <label>STX11</label>
    </interactant>
    <organismsDiffer>false</organismsDiffer>
    <experiments>3</experiments>
</comment>
<comment type="interaction">
    <interactant intactId="EBI-1104552">
        <id>Q9NYP9</id>
    </interactant>
    <interactant intactId="EBI-8465456">
        <id>Q7L2K0</id>
        <label>TEDC2</label>
    </interactant>
    <organismsDiffer>false</organismsDiffer>
    <experiments>3</experiments>
</comment>
<comment type="interaction">
    <interactant intactId="EBI-1104552">
        <id>Q9NYP9</id>
    </interactant>
    <interactant intactId="EBI-741515">
        <id>Q9NVV9</id>
        <label>THAP1</label>
    </interactant>
    <organismsDiffer>false</organismsDiffer>
    <experiments>3</experiments>
</comment>
<comment type="interaction">
    <interactant intactId="EBI-1104552">
        <id>Q9NYP9</id>
    </interactant>
    <interactant intactId="EBI-10241197">
        <id>Q3SY00</id>
        <label>TSGA10IP</label>
    </interactant>
    <organismsDiffer>false</organismsDiffer>
    <experiments>3</experiments>
</comment>
<comment type="interaction">
    <interactant intactId="EBI-1104552">
        <id>Q9NYP9</id>
    </interactant>
    <interactant intactId="EBI-359793">
        <id>P40222</id>
        <label>TXLNA</label>
    </interactant>
    <organismsDiffer>false</organismsDiffer>
    <experiments>5</experiments>
</comment>
<comment type="interaction">
    <interactant intactId="EBI-1104552">
        <id>Q9NYP9</id>
    </interactant>
    <interactant intactId="EBI-720609">
        <id>O76024</id>
        <label>WFS1</label>
    </interactant>
    <organismsDiffer>false</organismsDiffer>
    <experiments>3</experiments>
</comment>
<comment type="interaction">
    <interactant intactId="EBI-1104552">
        <id>Q9NYP9</id>
    </interactant>
    <interactant intactId="EBI-625509">
        <id>Q8N720</id>
        <label>ZNF655</label>
    </interactant>
    <organismsDiffer>false</organismsDiffer>
    <experiments>3</experiments>
</comment>
<comment type="interaction">
    <interactant intactId="EBI-1104552">
        <id>Q9NYP9</id>
    </interactant>
    <interactant intactId="EBI-23918878">
        <id>B4DJ69</id>
    </interactant>
    <organismsDiffer>false</organismsDiffer>
    <experiments>3</experiments>
</comment>
<comment type="subcellular location">
    <subcellularLocation>
        <location evidence="2">Nucleus</location>
    </subcellularLocation>
    <subcellularLocation>
        <location evidence="2">Chromosome</location>
    </subcellularLocation>
    <subcellularLocation>
        <location evidence="2">Chromosome</location>
        <location evidence="2">Centromere</location>
    </subcellularLocation>
    <text>Associated with centromeres in interphase cells, from late anaphase to the G1 phase. Not detected on centromeres during earlier phases of mitosis. Associated with chromatin.</text>
</comment>
<comment type="tissue specificity">
    <text evidence="2">Detected in testis.</text>
</comment>
<comment type="similarity">
    <text evidence="1">Belongs to the mis18 family.</text>
</comment>